<proteinExistence type="evidence at protein level"/>
<sequence length="195" mass="22037">MELSESVQRGIQTLADPGSFDSNAFALLLRAAFQSLLDARADEAALDHPYLKQIDPVVLKHCHAAAATCILEAGKHQVDKSTLSTYLEDCKFDRERIELFCTEYQNNKNSLETLLGSIGRSLPHITDVSWRLEYQIKTNQLHKMYRPGYLVTLNVENNDSQSYPEINFSCNMEQLQDLVGKLKDASKSLERATQL</sequence>
<dbReference type="EMBL" id="S54914">
    <property type="protein sequence ID" value="AAB25378.1"/>
    <property type="molecule type" value="Unassigned_DNA"/>
</dbReference>
<dbReference type="EMBL" id="AK041634">
    <property type="protein sequence ID" value="BAC31015.1"/>
    <property type="molecule type" value="mRNA"/>
</dbReference>
<dbReference type="EMBL" id="AK145955">
    <property type="protein sequence ID" value="BAE26783.1"/>
    <property type="molecule type" value="mRNA"/>
</dbReference>
<dbReference type="EMBL" id="AK145999">
    <property type="protein sequence ID" value="BAE26820.1"/>
    <property type="molecule type" value="mRNA"/>
</dbReference>
<dbReference type="EMBL" id="AL928680">
    <property type="status" value="NOT_ANNOTATED_CDS"/>
    <property type="molecule type" value="Genomic_DNA"/>
</dbReference>
<dbReference type="EMBL" id="BC048815">
    <property type="protein sequence ID" value="AAH48815.1"/>
    <property type="molecule type" value="mRNA"/>
</dbReference>
<dbReference type="CCDS" id="CCDS15710.1"/>
<dbReference type="RefSeq" id="NP_680087.1">
    <property type="nucleotide sequence ID" value="NM_147778.4"/>
</dbReference>
<dbReference type="SMR" id="Q63829"/>
<dbReference type="BioGRID" id="198407">
    <property type="interactions" value="2"/>
</dbReference>
<dbReference type="FunCoup" id="Q63829">
    <property type="interactions" value="110"/>
</dbReference>
<dbReference type="STRING" id="10090.ENSMUSP00000127385"/>
<dbReference type="iPTMnet" id="Q63829"/>
<dbReference type="PhosphoSitePlus" id="Q63829"/>
<dbReference type="jPOST" id="Q63829"/>
<dbReference type="PaxDb" id="10090-ENSMUSP00000049882"/>
<dbReference type="PeptideAtlas" id="Q63829"/>
<dbReference type="ProteomicsDB" id="283347"/>
<dbReference type="Pumba" id="Q63829"/>
<dbReference type="Antibodypedia" id="25612">
    <property type="antibodies" value="86 antibodies from 16 providers"/>
</dbReference>
<dbReference type="DNASU" id="12238"/>
<dbReference type="Ensembl" id="ENSMUST00000061158.5">
    <property type="protein sequence ID" value="ENSMUSP00000049882.5"/>
    <property type="gene ID" value="ENSMUSG00000051154.13"/>
</dbReference>
<dbReference type="GeneID" id="12238"/>
<dbReference type="KEGG" id="mmu:12238"/>
<dbReference type="UCSC" id="uc008ilx.1">
    <property type="organism name" value="mouse"/>
</dbReference>
<dbReference type="AGR" id="MGI:88218"/>
<dbReference type="CTD" id="23412"/>
<dbReference type="MGI" id="MGI:88218">
    <property type="gene designation" value="Commd3"/>
</dbReference>
<dbReference type="VEuPathDB" id="HostDB:ENSMUSG00000051154"/>
<dbReference type="eggNOG" id="ENOG502R79J">
    <property type="taxonomic scope" value="Eukaryota"/>
</dbReference>
<dbReference type="GeneTree" id="ENSGT00390000015971"/>
<dbReference type="HOGENOM" id="CLU_118734_0_0_1"/>
<dbReference type="InParanoid" id="Q63829"/>
<dbReference type="OMA" id="DWRLDYC"/>
<dbReference type="OrthoDB" id="1917519at2759"/>
<dbReference type="PhylomeDB" id="Q63829"/>
<dbReference type="TreeFam" id="TF329267"/>
<dbReference type="Reactome" id="R-MMU-6798695">
    <property type="pathway name" value="Neutrophil degranulation"/>
</dbReference>
<dbReference type="Reactome" id="R-MMU-8951664">
    <property type="pathway name" value="Neddylation"/>
</dbReference>
<dbReference type="BioGRID-ORCS" id="12238">
    <property type="hits" value="16 hits in 80 CRISPR screens"/>
</dbReference>
<dbReference type="ChiTaRS" id="Commd3">
    <property type="organism name" value="mouse"/>
</dbReference>
<dbReference type="PRO" id="PR:Q63829"/>
<dbReference type="Proteomes" id="UP000000589">
    <property type="component" value="Chromosome 2"/>
</dbReference>
<dbReference type="RNAct" id="Q63829">
    <property type="molecule type" value="protein"/>
</dbReference>
<dbReference type="Bgee" id="ENSMUSG00000051154">
    <property type="expression patterns" value="Expressed in cortical plate and 235 other cell types or tissues"/>
</dbReference>
<dbReference type="GO" id="GO:0005737">
    <property type="term" value="C:cytoplasm"/>
    <property type="evidence" value="ECO:0007669"/>
    <property type="project" value="UniProtKB-SubCell"/>
</dbReference>
<dbReference type="GO" id="GO:0005634">
    <property type="term" value="C:nucleus"/>
    <property type="evidence" value="ECO:0007669"/>
    <property type="project" value="UniProtKB-SubCell"/>
</dbReference>
<dbReference type="GO" id="GO:0006814">
    <property type="term" value="P:sodium ion transport"/>
    <property type="evidence" value="ECO:0007669"/>
    <property type="project" value="UniProtKB-KW"/>
</dbReference>
<dbReference type="CDD" id="cd04751">
    <property type="entry name" value="Commd3"/>
    <property type="match status" value="1"/>
</dbReference>
<dbReference type="InterPro" id="IPR017920">
    <property type="entry name" value="COMM"/>
</dbReference>
<dbReference type="InterPro" id="IPR037355">
    <property type="entry name" value="COMMD3"/>
</dbReference>
<dbReference type="PANTHER" id="PTHR31159">
    <property type="entry name" value="COMM DOMAIN-CONTAINING PROTEIN 3"/>
    <property type="match status" value="1"/>
</dbReference>
<dbReference type="PANTHER" id="PTHR31159:SF1">
    <property type="entry name" value="COMM DOMAIN-CONTAINING PROTEIN 3"/>
    <property type="match status" value="1"/>
</dbReference>
<dbReference type="Pfam" id="PF07258">
    <property type="entry name" value="COMM_domain"/>
    <property type="match status" value="1"/>
</dbReference>
<dbReference type="Pfam" id="PF21672">
    <property type="entry name" value="COMM_HN"/>
    <property type="match status" value="1"/>
</dbReference>
<dbReference type="PROSITE" id="PS51269">
    <property type="entry name" value="COMM"/>
    <property type="match status" value="1"/>
</dbReference>
<gene>
    <name type="primary">Commd3</name>
    <name type="synonym">Bup</name>
</gene>
<reference key="1">
    <citation type="journal article" date="1992" name="Mol. Biol. Rep.">
        <title>Nucleotide sequence of bup, an upstream gene in the bmi-1 proviral insertion locus.</title>
        <authorList>
            <person name="Haupt Y."/>
            <person name="Barri G."/>
            <person name="Adams J.M."/>
        </authorList>
    </citation>
    <scope>NUCLEOTIDE SEQUENCE</scope>
</reference>
<reference key="2">
    <citation type="journal article" date="2005" name="Science">
        <title>The transcriptional landscape of the mammalian genome.</title>
        <authorList>
            <person name="Carninci P."/>
            <person name="Kasukawa T."/>
            <person name="Katayama S."/>
            <person name="Gough J."/>
            <person name="Frith M.C."/>
            <person name="Maeda N."/>
            <person name="Oyama R."/>
            <person name="Ravasi T."/>
            <person name="Lenhard B."/>
            <person name="Wells C."/>
            <person name="Kodzius R."/>
            <person name="Shimokawa K."/>
            <person name="Bajic V.B."/>
            <person name="Brenner S.E."/>
            <person name="Batalov S."/>
            <person name="Forrest A.R."/>
            <person name="Zavolan M."/>
            <person name="Davis M.J."/>
            <person name="Wilming L.G."/>
            <person name="Aidinis V."/>
            <person name="Allen J.E."/>
            <person name="Ambesi-Impiombato A."/>
            <person name="Apweiler R."/>
            <person name="Aturaliya R.N."/>
            <person name="Bailey T.L."/>
            <person name="Bansal M."/>
            <person name="Baxter L."/>
            <person name="Beisel K.W."/>
            <person name="Bersano T."/>
            <person name="Bono H."/>
            <person name="Chalk A.M."/>
            <person name="Chiu K.P."/>
            <person name="Choudhary V."/>
            <person name="Christoffels A."/>
            <person name="Clutterbuck D.R."/>
            <person name="Crowe M.L."/>
            <person name="Dalla E."/>
            <person name="Dalrymple B.P."/>
            <person name="de Bono B."/>
            <person name="Della Gatta G."/>
            <person name="di Bernardo D."/>
            <person name="Down T."/>
            <person name="Engstrom P."/>
            <person name="Fagiolini M."/>
            <person name="Faulkner G."/>
            <person name="Fletcher C.F."/>
            <person name="Fukushima T."/>
            <person name="Furuno M."/>
            <person name="Futaki S."/>
            <person name="Gariboldi M."/>
            <person name="Georgii-Hemming P."/>
            <person name="Gingeras T.R."/>
            <person name="Gojobori T."/>
            <person name="Green R.E."/>
            <person name="Gustincich S."/>
            <person name="Harbers M."/>
            <person name="Hayashi Y."/>
            <person name="Hensch T.K."/>
            <person name="Hirokawa N."/>
            <person name="Hill D."/>
            <person name="Huminiecki L."/>
            <person name="Iacono M."/>
            <person name="Ikeo K."/>
            <person name="Iwama A."/>
            <person name="Ishikawa T."/>
            <person name="Jakt M."/>
            <person name="Kanapin A."/>
            <person name="Katoh M."/>
            <person name="Kawasawa Y."/>
            <person name="Kelso J."/>
            <person name="Kitamura H."/>
            <person name="Kitano H."/>
            <person name="Kollias G."/>
            <person name="Krishnan S.P."/>
            <person name="Kruger A."/>
            <person name="Kummerfeld S.K."/>
            <person name="Kurochkin I.V."/>
            <person name="Lareau L.F."/>
            <person name="Lazarevic D."/>
            <person name="Lipovich L."/>
            <person name="Liu J."/>
            <person name="Liuni S."/>
            <person name="McWilliam S."/>
            <person name="Madan Babu M."/>
            <person name="Madera M."/>
            <person name="Marchionni L."/>
            <person name="Matsuda H."/>
            <person name="Matsuzawa S."/>
            <person name="Miki H."/>
            <person name="Mignone F."/>
            <person name="Miyake S."/>
            <person name="Morris K."/>
            <person name="Mottagui-Tabar S."/>
            <person name="Mulder N."/>
            <person name="Nakano N."/>
            <person name="Nakauchi H."/>
            <person name="Ng P."/>
            <person name="Nilsson R."/>
            <person name="Nishiguchi S."/>
            <person name="Nishikawa S."/>
            <person name="Nori F."/>
            <person name="Ohara O."/>
            <person name="Okazaki Y."/>
            <person name="Orlando V."/>
            <person name="Pang K.C."/>
            <person name="Pavan W.J."/>
            <person name="Pavesi G."/>
            <person name="Pesole G."/>
            <person name="Petrovsky N."/>
            <person name="Piazza S."/>
            <person name="Reed J."/>
            <person name="Reid J.F."/>
            <person name="Ring B.Z."/>
            <person name="Ringwald M."/>
            <person name="Rost B."/>
            <person name="Ruan Y."/>
            <person name="Salzberg S.L."/>
            <person name="Sandelin A."/>
            <person name="Schneider C."/>
            <person name="Schoenbach C."/>
            <person name="Sekiguchi K."/>
            <person name="Semple C.A."/>
            <person name="Seno S."/>
            <person name="Sessa L."/>
            <person name="Sheng Y."/>
            <person name="Shibata Y."/>
            <person name="Shimada H."/>
            <person name="Shimada K."/>
            <person name="Silva D."/>
            <person name="Sinclair B."/>
            <person name="Sperling S."/>
            <person name="Stupka E."/>
            <person name="Sugiura K."/>
            <person name="Sultana R."/>
            <person name="Takenaka Y."/>
            <person name="Taki K."/>
            <person name="Tammoja K."/>
            <person name="Tan S.L."/>
            <person name="Tang S."/>
            <person name="Taylor M.S."/>
            <person name="Tegner J."/>
            <person name="Teichmann S.A."/>
            <person name="Ueda H.R."/>
            <person name="van Nimwegen E."/>
            <person name="Verardo R."/>
            <person name="Wei C.L."/>
            <person name="Yagi K."/>
            <person name="Yamanishi H."/>
            <person name="Zabarovsky E."/>
            <person name="Zhu S."/>
            <person name="Zimmer A."/>
            <person name="Hide W."/>
            <person name="Bult C."/>
            <person name="Grimmond S.M."/>
            <person name="Teasdale R.D."/>
            <person name="Liu E.T."/>
            <person name="Brusic V."/>
            <person name="Quackenbush J."/>
            <person name="Wahlestedt C."/>
            <person name="Mattick J.S."/>
            <person name="Hume D.A."/>
            <person name="Kai C."/>
            <person name="Sasaki D."/>
            <person name="Tomaru Y."/>
            <person name="Fukuda S."/>
            <person name="Kanamori-Katayama M."/>
            <person name="Suzuki M."/>
            <person name="Aoki J."/>
            <person name="Arakawa T."/>
            <person name="Iida J."/>
            <person name="Imamura K."/>
            <person name="Itoh M."/>
            <person name="Kato T."/>
            <person name="Kawaji H."/>
            <person name="Kawagashira N."/>
            <person name="Kawashima T."/>
            <person name="Kojima M."/>
            <person name="Kondo S."/>
            <person name="Konno H."/>
            <person name="Nakano K."/>
            <person name="Ninomiya N."/>
            <person name="Nishio T."/>
            <person name="Okada M."/>
            <person name="Plessy C."/>
            <person name="Shibata K."/>
            <person name="Shiraki T."/>
            <person name="Suzuki S."/>
            <person name="Tagami M."/>
            <person name="Waki K."/>
            <person name="Watahiki A."/>
            <person name="Okamura-Oho Y."/>
            <person name="Suzuki H."/>
            <person name="Kawai J."/>
            <person name="Hayashizaki Y."/>
        </authorList>
    </citation>
    <scope>NUCLEOTIDE SEQUENCE [LARGE SCALE MRNA]</scope>
    <source>
        <strain>C57BL/6J</strain>
        <tissue>Placenta</tissue>
        <tissue>Thymus</tissue>
    </source>
</reference>
<reference key="3">
    <citation type="journal article" date="2009" name="PLoS Biol.">
        <title>Lineage-specific biology revealed by a finished genome assembly of the mouse.</title>
        <authorList>
            <person name="Church D.M."/>
            <person name="Goodstadt L."/>
            <person name="Hillier L.W."/>
            <person name="Zody M.C."/>
            <person name="Goldstein S."/>
            <person name="She X."/>
            <person name="Bult C.J."/>
            <person name="Agarwala R."/>
            <person name="Cherry J.L."/>
            <person name="DiCuccio M."/>
            <person name="Hlavina W."/>
            <person name="Kapustin Y."/>
            <person name="Meric P."/>
            <person name="Maglott D."/>
            <person name="Birtle Z."/>
            <person name="Marques A.C."/>
            <person name="Graves T."/>
            <person name="Zhou S."/>
            <person name="Teague B."/>
            <person name="Potamousis K."/>
            <person name="Churas C."/>
            <person name="Place M."/>
            <person name="Herschleb J."/>
            <person name="Runnheim R."/>
            <person name="Forrest D."/>
            <person name="Amos-Landgraf J."/>
            <person name="Schwartz D.C."/>
            <person name="Cheng Z."/>
            <person name="Lindblad-Toh K."/>
            <person name="Eichler E.E."/>
            <person name="Ponting C.P."/>
        </authorList>
    </citation>
    <scope>NUCLEOTIDE SEQUENCE [LARGE SCALE GENOMIC DNA]</scope>
    <source>
        <strain>C57BL/6J</strain>
    </source>
</reference>
<reference key="4">
    <citation type="journal article" date="2004" name="Genome Res.">
        <title>The status, quality, and expansion of the NIH full-length cDNA project: the Mammalian Gene Collection (MGC).</title>
        <authorList>
            <consortium name="The MGC Project Team"/>
        </authorList>
    </citation>
    <scope>NUCLEOTIDE SEQUENCE [LARGE SCALE MRNA]</scope>
    <source>
        <strain>FVB/N</strain>
        <tissue>Mammary tumor</tissue>
    </source>
</reference>
<reference key="5">
    <citation type="journal article" date="2010" name="Cell">
        <title>A tissue-specific atlas of mouse protein phosphorylation and expression.</title>
        <authorList>
            <person name="Huttlin E.L."/>
            <person name="Jedrychowski M.P."/>
            <person name="Elias J.E."/>
            <person name="Goswami T."/>
            <person name="Rad R."/>
            <person name="Beausoleil S.A."/>
            <person name="Villen J."/>
            <person name="Haas W."/>
            <person name="Sowa M.E."/>
            <person name="Gygi S.P."/>
        </authorList>
    </citation>
    <scope>IDENTIFICATION BY MASS SPECTROMETRY [LARGE SCALE ANALYSIS]</scope>
    <source>
        <tissue>Brain</tissue>
        <tissue>Brown adipose tissue</tissue>
        <tissue>Heart</tissue>
        <tissue>Kidney</tissue>
        <tissue>Liver</tissue>
        <tissue>Lung</tissue>
        <tissue>Pancreas</tissue>
        <tissue>Spleen</tissue>
        <tissue>Testis</tissue>
    </source>
</reference>
<protein>
    <recommendedName>
        <fullName>COMM domain-containing protein 3</fullName>
    </recommendedName>
    <alternativeName>
        <fullName>Bmi-1 upstream gene protein</fullName>
        <shortName>Bup protein</shortName>
    </alternativeName>
</protein>
<comment type="function">
    <text evidence="1">Scaffold protein in the commander complex that is essential for endosomal recycling of transmembrane cargos; the commander complex is composed of the CCC subcomplex and the retriever subcomplex (By similarity). May modulate activity of cullin-RING E3 ubiquitin ligase (CRL) complexes (By similarity). May down-regulate activation of NF-kappa-B (By similarity). Modulates Na(+) transport in epithelial cells by regulation of apical cell surface expression of amiloride-sensitive sodium channel (ENaC) subunits (By similarity).</text>
</comment>
<comment type="subunit">
    <text evidence="1">Component of the commander complex consisting of the CCC subcomplex and the retriever subcomplex (By similarity). Component of the CCC (COMMD/CCDC22/CCDC93) subcomplex consisting of COMMD1, COMMD2, COMMD3, COMMD4, COMMD5, COMMD6, COMMD7, COMMD8, COMMD9, COMMD10, CCDC22 and CCDC93; within the complex forms a heterodimer with COMMD2 (By similarity). Interacts with NFKB1/p105 (By similarity). Interacts with CCDC22, CCDC93, SCNN1B, CUL3, CUL4A, CUL4B, CUL5 (By similarity).</text>
</comment>
<comment type="subcellular location">
    <subcellularLocation>
        <location evidence="1">Cytoplasm</location>
    </subcellularLocation>
    <subcellularLocation>
        <location evidence="1">Nucleus</location>
    </subcellularLocation>
</comment>
<comment type="similarity">
    <text evidence="3">Belongs to the COMM domain-containing protein 3 family.</text>
</comment>
<organism>
    <name type="scientific">Mus musculus</name>
    <name type="common">Mouse</name>
    <dbReference type="NCBI Taxonomy" id="10090"/>
    <lineage>
        <taxon>Eukaryota</taxon>
        <taxon>Metazoa</taxon>
        <taxon>Chordata</taxon>
        <taxon>Craniata</taxon>
        <taxon>Vertebrata</taxon>
        <taxon>Euteleostomi</taxon>
        <taxon>Mammalia</taxon>
        <taxon>Eutheria</taxon>
        <taxon>Euarchontoglires</taxon>
        <taxon>Glires</taxon>
        <taxon>Rodentia</taxon>
        <taxon>Myomorpha</taxon>
        <taxon>Muroidea</taxon>
        <taxon>Muridae</taxon>
        <taxon>Murinae</taxon>
        <taxon>Mus</taxon>
        <taxon>Mus</taxon>
    </lineage>
</organism>
<accession>Q63829</accession>
<accession>A2ASR4</accession>
<accession>Q3UKI1</accession>
<accession>Q8C9P5</accession>
<name>COMD3_MOUSE</name>
<keyword id="KW-0963">Cytoplasm</keyword>
<keyword id="KW-0406">Ion transport</keyword>
<keyword id="KW-0539">Nucleus</keyword>
<keyword id="KW-1185">Reference proteome</keyword>
<keyword id="KW-0915">Sodium</keyword>
<keyword id="KW-0739">Sodium transport</keyword>
<keyword id="KW-0804">Transcription</keyword>
<keyword id="KW-0805">Transcription regulation</keyword>
<keyword id="KW-0813">Transport</keyword>
<keyword id="KW-0833">Ubl conjugation pathway</keyword>
<evidence type="ECO:0000250" key="1">
    <source>
        <dbReference type="UniProtKB" id="Q9UBI1"/>
    </source>
</evidence>
<evidence type="ECO:0000255" key="2">
    <source>
        <dbReference type="PROSITE-ProRule" id="PRU00602"/>
    </source>
</evidence>
<evidence type="ECO:0000305" key="3"/>
<feature type="chain" id="PRO_0000077390" description="COMM domain-containing protein 3">
    <location>
        <begin position="1"/>
        <end position="195"/>
    </location>
</feature>
<feature type="domain" description="COMM" evidence="2">
    <location>
        <begin position="124"/>
        <end position="193"/>
    </location>
</feature>